<accession>Q0BU46</accession>
<feature type="chain" id="PRO_0000305460" description="Pantothenate synthetase">
    <location>
        <begin position="1"/>
        <end position="287"/>
    </location>
</feature>
<feature type="active site" description="Proton donor" evidence="1">
    <location>
        <position position="37"/>
    </location>
</feature>
<feature type="binding site" evidence="1">
    <location>
        <begin position="30"/>
        <end position="37"/>
    </location>
    <ligand>
        <name>ATP</name>
        <dbReference type="ChEBI" id="CHEBI:30616"/>
    </ligand>
</feature>
<feature type="binding site" evidence="1">
    <location>
        <position position="61"/>
    </location>
    <ligand>
        <name>(R)-pantoate</name>
        <dbReference type="ChEBI" id="CHEBI:15980"/>
    </ligand>
</feature>
<feature type="binding site" evidence="1">
    <location>
        <position position="61"/>
    </location>
    <ligand>
        <name>beta-alanine</name>
        <dbReference type="ChEBI" id="CHEBI:57966"/>
    </ligand>
</feature>
<feature type="binding site" evidence="1">
    <location>
        <begin position="147"/>
        <end position="150"/>
    </location>
    <ligand>
        <name>ATP</name>
        <dbReference type="ChEBI" id="CHEBI:30616"/>
    </ligand>
</feature>
<feature type="binding site" evidence="1">
    <location>
        <position position="153"/>
    </location>
    <ligand>
        <name>(R)-pantoate</name>
        <dbReference type="ChEBI" id="CHEBI:15980"/>
    </ligand>
</feature>
<feature type="binding site" evidence="1">
    <location>
        <begin position="184"/>
        <end position="187"/>
    </location>
    <ligand>
        <name>ATP</name>
        <dbReference type="ChEBI" id="CHEBI:30616"/>
    </ligand>
</feature>
<keyword id="KW-0067">ATP-binding</keyword>
<keyword id="KW-0963">Cytoplasm</keyword>
<keyword id="KW-0436">Ligase</keyword>
<keyword id="KW-0547">Nucleotide-binding</keyword>
<keyword id="KW-0566">Pantothenate biosynthesis</keyword>
<keyword id="KW-1185">Reference proteome</keyword>
<gene>
    <name evidence="1" type="primary">panC</name>
    <name type="ordered locus">GbCGDNIH1_0758</name>
</gene>
<proteinExistence type="inferred from homology"/>
<evidence type="ECO:0000255" key="1">
    <source>
        <dbReference type="HAMAP-Rule" id="MF_00158"/>
    </source>
</evidence>
<name>PANC_GRABC</name>
<dbReference type="EC" id="6.3.2.1" evidence="1"/>
<dbReference type="EMBL" id="CP000394">
    <property type="protein sequence ID" value="ABI61656.1"/>
    <property type="molecule type" value="Genomic_DNA"/>
</dbReference>
<dbReference type="RefSeq" id="WP_011631465.1">
    <property type="nucleotide sequence ID" value="NC_008343.2"/>
</dbReference>
<dbReference type="SMR" id="Q0BU46"/>
<dbReference type="STRING" id="391165.GbCGDNIH1_0758"/>
<dbReference type="KEGG" id="gbe:GbCGDNIH1_0758"/>
<dbReference type="eggNOG" id="COG0414">
    <property type="taxonomic scope" value="Bacteria"/>
</dbReference>
<dbReference type="HOGENOM" id="CLU_047148_0_2_5"/>
<dbReference type="OrthoDB" id="9773087at2"/>
<dbReference type="UniPathway" id="UPA00028">
    <property type="reaction ID" value="UER00005"/>
</dbReference>
<dbReference type="Proteomes" id="UP000001963">
    <property type="component" value="Chromosome"/>
</dbReference>
<dbReference type="GO" id="GO:0005829">
    <property type="term" value="C:cytosol"/>
    <property type="evidence" value="ECO:0007669"/>
    <property type="project" value="TreeGrafter"/>
</dbReference>
<dbReference type="GO" id="GO:0005524">
    <property type="term" value="F:ATP binding"/>
    <property type="evidence" value="ECO:0007669"/>
    <property type="project" value="UniProtKB-KW"/>
</dbReference>
<dbReference type="GO" id="GO:0004592">
    <property type="term" value="F:pantoate-beta-alanine ligase activity"/>
    <property type="evidence" value="ECO:0007669"/>
    <property type="project" value="UniProtKB-UniRule"/>
</dbReference>
<dbReference type="GO" id="GO:0015940">
    <property type="term" value="P:pantothenate biosynthetic process"/>
    <property type="evidence" value="ECO:0007669"/>
    <property type="project" value="UniProtKB-UniRule"/>
</dbReference>
<dbReference type="CDD" id="cd00560">
    <property type="entry name" value="PanC"/>
    <property type="match status" value="1"/>
</dbReference>
<dbReference type="Gene3D" id="3.40.50.620">
    <property type="entry name" value="HUPs"/>
    <property type="match status" value="1"/>
</dbReference>
<dbReference type="Gene3D" id="3.30.1300.10">
    <property type="entry name" value="Pantoate-beta-alanine ligase, C-terminal domain"/>
    <property type="match status" value="1"/>
</dbReference>
<dbReference type="HAMAP" id="MF_00158">
    <property type="entry name" value="PanC"/>
    <property type="match status" value="1"/>
</dbReference>
<dbReference type="InterPro" id="IPR003721">
    <property type="entry name" value="Pantoate_ligase"/>
</dbReference>
<dbReference type="InterPro" id="IPR042176">
    <property type="entry name" value="Pantoate_ligase_C"/>
</dbReference>
<dbReference type="InterPro" id="IPR014729">
    <property type="entry name" value="Rossmann-like_a/b/a_fold"/>
</dbReference>
<dbReference type="NCBIfam" id="TIGR00018">
    <property type="entry name" value="panC"/>
    <property type="match status" value="1"/>
</dbReference>
<dbReference type="PANTHER" id="PTHR21299">
    <property type="entry name" value="CYTIDYLATE KINASE/PANTOATE-BETA-ALANINE LIGASE"/>
    <property type="match status" value="1"/>
</dbReference>
<dbReference type="PANTHER" id="PTHR21299:SF1">
    <property type="entry name" value="PANTOATE--BETA-ALANINE LIGASE"/>
    <property type="match status" value="1"/>
</dbReference>
<dbReference type="Pfam" id="PF02569">
    <property type="entry name" value="Pantoate_ligase"/>
    <property type="match status" value="1"/>
</dbReference>
<dbReference type="SUPFAM" id="SSF52374">
    <property type="entry name" value="Nucleotidylyl transferase"/>
    <property type="match status" value="1"/>
</dbReference>
<reference key="1">
    <citation type="journal article" date="2007" name="J. Bacteriol.">
        <title>Genome sequence analysis of the emerging human pathogenic acetic acid bacterium Granulibacter bethesdensis.</title>
        <authorList>
            <person name="Greenberg D.E."/>
            <person name="Porcella S.F."/>
            <person name="Zelazny A.M."/>
            <person name="Virtaneva K."/>
            <person name="Sturdevant D.E."/>
            <person name="Kupko J.J. III"/>
            <person name="Barbian K.D."/>
            <person name="Babar A."/>
            <person name="Dorward D.W."/>
            <person name="Holland S.M."/>
        </authorList>
    </citation>
    <scope>NUCLEOTIDE SEQUENCE [LARGE SCALE GENOMIC DNA]</scope>
    <source>
        <strain>ATCC BAA-1260 / CGDNIH1</strain>
    </source>
</reference>
<organism>
    <name type="scientific">Granulibacter bethesdensis (strain ATCC BAA-1260 / CGDNIH1)</name>
    <dbReference type="NCBI Taxonomy" id="391165"/>
    <lineage>
        <taxon>Bacteria</taxon>
        <taxon>Pseudomonadati</taxon>
        <taxon>Pseudomonadota</taxon>
        <taxon>Alphaproteobacteria</taxon>
        <taxon>Acetobacterales</taxon>
        <taxon>Acetobacteraceae</taxon>
        <taxon>Granulibacter</taxon>
    </lineage>
</organism>
<sequence length="287" mass="31223">MHLARTLPTLQQAVHQLRHAGKRIAFVPTMGALHEGHQSLVRAAIAQDYAVVTSVFVNPTQFGPSEDLARYPRDEKGDIAILERTGCSIAWLPDVDTMYPPGDATGFVMGGPALGWEGARRPGHFNGVAQVVAKLFGQVRPDAAFFGEKDWQQLQVIRRLTADLLLPVAIHGVPTQREEDGLAMSSRNRFLSPEERAIAPLLFRTLLQAGHALSSSPDAEEICKNAIAALNGQGFDVDYFALIEGSSLSSIAILPEGDDWRLITAARLGSVRLLDNLGRAELARFRA</sequence>
<comment type="function">
    <text evidence="1">Catalyzes the condensation of pantoate with beta-alanine in an ATP-dependent reaction via a pantoyl-adenylate intermediate.</text>
</comment>
<comment type="catalytic activity">
    <reaction evidence="1">
        <text>(R)-pantoate + beta-alanine + ATP = (R)-pantothenate + AMP + diphosphate + H(+)</text>
        <dbReference type="Rhea" id="RHEA:10912"/>
        <dbReference type="ChEBI" id="CHEBI:15378"/>
        <dbReference type="ChEBI" id="CHEBI:15980"/>
        <dbReference type="ChEBI" id="CHEBI:29032"/>
        <dbReference type="ChEBI" id="CHEBI:30616"/>
        <dbReference type="ChEBI" id="CHEBI:33019"/>
        <dbReference type="ChEBI" id="CHEBI:57966"/>
        <dbReference type="ChEBI" id="CHEBI:456215"/>
        <dbReference type="EC" id="6.3.2.1"/>
    </reaction>
</comment>
<comment type="pathway">
    <text evidence="1">Cofactor biosynthesis; (R)-pantothenate biosynthesis; (R)-pantothenate from (R)-pantoate and beta-alanine: step 1/1.</text>
</comment>
<comment type="subunit">
    <text evidence="1">Homodimer.</text>
</comment>
<comment type="subcellular location">
    <subcellularLocation>
        <location evidence="1">Cytoplasm</location>
    </subcellularLocation>
</comment>
<comment type="miscellaneous">
    <text evidence="1">The reaction proceeds by a bi uni uni bi ping pong mechanism.</text>
</comment>
<comment type="similarity">
    <text evidence="1">Belongs to the pantothenate synthetase family.</text>
</comment>
<protein>
    <recommendedName>
        <fullName evidence="1">Pantothenate synthetase</fullName>
        <shortName evidence="1">PS</shortName>
        <ecNumber evidence="1">6.3.2.1</ecNumber>
    </recommendedName>
    <alternativeName>
        <fullName evidence="1">Pantoate--beta-alanine ligase</fullName>
    </alternativeName>
    <alternativeName>
        <fullName evidence="1">Pantoate-activating enzyme</fullName>
    </alternativeName>
</protein>